<name>HYD2B_PYRFU</name>
<proteinExistence type="evidence at protein level"/>
<feature type="chain" id="PRO_0000420727" description="Sulfhydrogenase 2 subunit beta">
    <location>
        <begin position="1"/>
        <end position="334"/>
    </location>
</feature>
<feature type="domain" description="4Fe-4S ferredoxin-type 1" evidence="2">
    <location>
        <begin position="220"/>
        <end position="250"/>
    </location>
</feature>
<feature type="domain" description="4Fe-4S ferredoxin-type 2" evidence="2">
    <location>
        <begin position="294"/>
        <end position="328"/>
    </location>
</feature>
<feature type="binding site" evidence="1">
    <location>
        <position position="229"/>
    </location>
    <ligand>
        <name>[4Fe-4S] cluster</name>
        <dbReference type="ChEBI" id="CHEBI:49883"/>
        <label>1</label>
    </ligand>
</feature>
<feature type="binding site" evidence="1">
    <location>
        <position position="232"/>
    </location>
    <ligand>
        <name>[4Fe-4S] cluster</name>
        <dbReference type="ChEBI" id="CHEBI:49883"/>
        <label>1</label>
    </ligand>
</feature>
<feature type="binding site" evidence="1">
    <location>
        <position position="235"/>
    </location>
    <ligand>
        <name>[4Fe-4S] cluster</name>
        <dbReference type="ChEBI" id="CHEBI:49883"/>
        <label>1</label>
    </ligand>
</feature>
<feature type="binding site" evidence="1">
    <location>
        <position position="239"/>
    </location>
    <ligand>
        <name>[4Fe-4S] cluster</name>
        <dbReference type="ChEBI" id="CHEBI:49883"/>
        <label>1</label>
    </ligand>
</feature>
<feature type="binding site" evidence="1">
    <location>
        <position position="306"/>
    </location>
    <ligand>
        <name>[4Fe-4S] cluster</name>
        <dbReference type="ChEBI" id="CHEBI:49883"/>
        <label>2</label>
    </ligand>
</feature>
<feature type="binding site" evidence="1">
    <location>
        <position position="309"/>
    </location>
    <ligand>
        <name>[4Fe-4S] cluster</name>
        <dbReference type="ChEBI" id="CHEBI:49883"/>
        <label>2</label>
    </ligand>
</feature>
<feature type="binding site" evidence="1">
    <location>
        <position position="312"/>
    </location>
    <ligand>
        <name>[4Fe-4S] cluster</name>
        <dbReference type="ChEBI" id="CHEBI:49883"/>
        <label>2</label>
    </ligand>
</feature>
<feature type="binding site" evidence="1">
    <location>
        <position position="316"/>
    </location>
    <ligand>
        <name>[4Fe-4S] cluster</name>
        <dbReference type="ChEBI" id="CHEBI:49883"/>
        <label>2</label>
    </ligand>
</feature>
<protein>
    <recommendedName>
        <fullName>Sulfhydrogenase 2 subunit beta</fullName>
        <ecNumber>1.12.98.4</ecNumber>
    </recommendedName>
    <alternativeName>
        <fullName evidence="6">Hydrogenase-II subunit beta</fullName>
        <shortName evidence="6">H-II beta</shortName>
    </alternativeName>
    <alternativeName>
        <fullName evidence="6">Sulfhydrogenase II subunit beta</fullName>
    </alternativeName>
    <alternativeName>
        <fullName evidence="6">Sulfur reductase subunit ShyB</fullName>
    </alternativeName>
</protein>
<gene>
    <name evidence="8" type="primary">shyB</name>
    <name type="ordered locus">PF1329</name>
</gene>
<dbReference type="EC" id="1.12.98.4"/>
<dbReference type="EMBL" id="AF176650">
    <property type="protein sequence ID" value="AAF61851.1"/>
    <property type="molecule type" value="Genomic_DNA"/>
</dbReference>
<dbReference type="EMBL" id="AE009950">
    <property type="protein sequence ID" value="AAL81453.1"/>
    <property type="molecule type" value="Genomic_DNA"/>
</dbReference>
<dbReference type="RefSeq" id="WP_011012475.1">
    <property type="nucleotide sequence ID" value="NZ_CP023154.1"/>
</dbReference>
<dbReference type="STRING" id="186497.PF1329"/>
<dbReference type="PaxDb" id="186497-PF1329"/>
<dbReference type="DNASU" id="1469204"/>
<dbReference type="GeneID" id="41713132"/>
<dbReference type="KEGG" id="pfu:PF1329"/>
<dbReference type="PATRIC" id="fig|186497.12.peg.1392"/>
<dbReference type="eggNOG" id="arCOG05128">
    <property type="taxonomic scope" value="Archaea"/>
</dbReference>
<dbReference type="HOGENOM" id="CLU_046702_0_0_2"/>
<dbReference type="OrthoDB" id="35334at2157"/>
<dbReference type="PhylomeDB" id="E7FHN9"/>
<dbReference type="BioCyc" id="MetaCyc:MONOMER-12580"/>
<dbReference type="BRENDA" id="1.12.1.5">
    <property type="organism ID" value="5243"/>
</dbReference>
<dbReference type="BRENDA" id="1.12.98.4">
    <property type="organism ID" value="5243"/>
</dbReference>
<dbReference type="Proteomes" id="UP000001013">
    <property type="component" value="Chromosome"/>
</dbReference>
<dbReference type="GO" id="GO:0005737">
    <property type="term" value="C:cytoplasm"/>
    <property type="evidence" value="ECO:0007669"/>
    <property type="project" value="UniProtKB-SubCell"/>
</dbReference>
<dbReference type="GO" id="GO:0051539">
    <property type="term" value="F:4 iron, 4 sulfur cluster binding"/>
    <property type="evidence" value="ECO:0007669"/>
    <property type="project" value="UniProtKB-KW"/>
</dbReference>
<dbReference type="GO" id="GO:0046872">
    <property type="term" value="F:metal ion binding"/>
    <property type="evidence" value="ECO:0007669"/>
    <property type="project" value="UniProtKB-KW"/>
</dbReference>
<dbReference type="GO" id="GO:0033796">
    <property type="term" value="F:sulfur reductase activity"/>
    <property type="evidence" value="ECO:0007669"/>
    <property type="project" value="UniProtKB-EC"/>
</dbReference>
<dbReference type="Gene3D" id="1.10.1060.10">
    <property type="entry name" value="Alpha-helical ferredoxin"/>
    <property type="match status" value="1"/>
</dbReference>
<dbReference type="InterPro" id="IPR017896">
    <property type="entry name" value="4Fe4S_Fe-S-bd"/>
</dbReference>
<dbReference type="InterPro" id="IPR017900">
    <property type="entry name" value="4Fe4S_Fe_S_CS"/>
</dbReference>
<dbReference type="InterPro" id="IPR009051">
    <property type="entry name" value="Helical_ferredxn"/>
</dbReference>
<dbReference type="InterPro" id="IPR053644">
    <property type="entry name" value="Sulfhydrogenase_beta"/>
</dbReference>
<dbReference type="NCBIfam" id="NF040829">
    <property type="entry name" value="sulfhyd_ShyB"/>
    <property type="match status" value="1"/>
</dbReference>
<dbReference type="PANTHER" id="PTHR40447">
    <property type="entry name" value="ANAEROBIC SULFITE REDUCTASE SUBUNIT A"/>
    <property type="match status" value="1"/>
</dbReference>
<dbReference type="PANTHER" id="PTHR40447:SF1">
    <property type="entry name" value="ANAEROBIC SULFITE REDUCTASE SUBUNIT A"/>
    <property type="match status" value="1"/>
</dbReference>
<dbReference type="Pfam" id="PF17179">
    <property type="entry name" value="Fer4_22"/>
    <property type="match status" value="1"/>
</dbReference>
<dbReference type="SUPFAM" id="SSF46548">
    <property type="entry name" value="alpha-helical ferredoxin"/>
    <property type="match status" value="1"/>
</dbReference>
<dbReference type="PROSITE" id="PS00198">
    <property type="entry name" value="4FE4S_FER_1"/>
    <property type="match status" value="2"/>
</dbReference>
<dbReference type="PROSITE" id="PS51379">
    <property type="entry name" value="4FE4S_FER_2"/>
    <property type="match status" value="2"/>
</dbReference>
<evidence type="ECO:0000250" key="1">
    <source>
        <dbReference type="UniProtKB" id="P00198"/>
    </source>
</evidence>
<evidence type="ECO:0000255" key="2">
    <source>
        <dbReference type="PROSITE-ProRule" id="PRU00711"/>
    </source>
</evidence>
<evidence type="ECO:0000269" key="3">
    <source>
    </source>
</evidence>
<evidence type="ECO:0000269" key="4">
    <source>
    </source>
</evidence>
<evidence type="ECO:0000269" key="5">
    <source>
    </source>
</evidence>
<evidence type="ECO:0000303" key="6">
    <source>
    </source>
</evidence>
<evidence type="ECO:0000305" key="7"/>
<evidence type="ECO:0000312" key="8">
    <source>
        <dbReference type="EMBL" id="AAF61851.1"/>
    </source>
</evidence>
<evidence type="ECO:0000312" key="9">
    <source>
        <dbReference type="EMBL" id="AAL81453.1"/>
    </source>
</evidence>
<accession>E7FHN9</accession>
<accession>Q7LWY9</accession>
<accession>Q9P9M7</accession>
<sequence length="334" mass="39181">MRYVKLHSEYFPEFFNRLKEVGRVYGPVRHNSTYRFEEVNSIDELSLDYTRTILPPKKFFIRPRDAMFKIQKNEVTEVDGDGKFVLFGVHSCDIHGIKILDKVYLSNPPDPYYERRRKNAFIVGISCMPDEYCFCKSLGTDFAMDGFDIFLHELPDGWLVRVGSVKGHEFVWENQDIFDDVTEEDLRNFKEFEEKRAKAFKKSLNKEGLADILDLAFTSKVWKKYAEKCLGCGNCTIVCPTCRCYEVCDTWVRAYEALRMRRYDSCFMPTHGLVAGGHNFRPTRLDRFRHRYYCKNYFDPEAGFNCVGCGRCDEFCPARIEHVKVLDEVREGLI</sequence>
<keyword id="KW-0004">4Fe-4S</keyword>
<keyword id="KW-0963">Cytoplasm</keyword>
<keyword id="KW-0903">Direct protein sequencing</keyword>
<keyword id="KW-0408">Iron</keyword>
<keyword id="KW-0411">Iron-sulfur</keyword>
<keyword id="KW-0479">Metal-binding</keyword>
<keyword id="KW-0560">Oxidoreductase</keyword>
<keyword id="KW-1185">Reference proteome</keyword>
<keyword id="KW-0677">Repeat</keyword>
<reference evidence="7 8" key="1">
    <citation type="journal article" date="2000" name="J. Bacteriol.">
        <title>Characterization of hydrogenase II from the hyperthermophilic archaeon Pyrococcus furiosus and assessment of its role in sulfur reduction.</title>
        <authorList>
            <person name="Ma K."/>
            <person name="Weiss R."/>
            <person name="Adams M.W."/>
        </authorList>
    </citation>
    <scope>NUCLEOTIDE SEQUENCE [GENOMIC DNA]</scope>
    <scope>PROTEIN SEQUENCE OF 1-20</scope>
    <scope>FUNCTION</scope>
    <scope>CATALYTIC ACTIVITY</scope>
    <scope>COFACTOR</scope>
    <scope>BIOPHYSICOCHEMICAL PROPERTIES</scope>
    <scope>SUBCELLULAR LOCATION</scope>
    <scope>SUBUNIT</scope>
    <scope>EPR SPECTROSCOPY</scope>
    <source>
        <strain evidence="8">ATCC 43587 / DSM 3638 / JCM 8422 / Vc1</strain>
    </source>
</reference>
<reference evidence="9" key="2">
    <citation type="journal article" date="1999" name="Genetics">
        <title>Divergence of the hyperthermophilic archaea Pyrococcus furiosus and P. horikoshii inferred from complete genomic sequences.</title>
        <authorList>
            <person name="Maeder D.L."/>
            <person name="Weiss R.B."/>
            <person name="Dunn D.M."/>
            <person name="Cherry J.L."/>
            <person name="Gonzalez J.M."/>
            <person name="DiRuggiero J."/>
            <person name="Robb F.T."/>
        </authorList>
    </citation>
    <scope>NUCLEOTIDE SEQUENCE [LARGE SCALE GENOMIC DNA]</scope>
    <source>
        <strain>ATCC 43587 / DSM 3638 / JCM 8422 / Vc1</strain>
    </source>
</reference>
<reference evidence="7" key="3">
    <citation type="journal article" date="2001" name="J. Bacteriol.">
        <title>Key role for sulfur in peptide metabolism and in regulation of three hydrogenases in the hyperthermophilic archaeon Pyrococcus furiosus.</title>
        <authorList>
            <person name="Adams M.W."/>
            <person name="Holden J.F."/>
            <person name="Menon A.L."/>
            <person name="Schut G.J."/>
            <person name="Grunden A.M."/>
            <person name="Hou C."/>
            <person name="Hutchins A.M."/>
            <person name="Jenney F.E. Jr."/>
            <person name="Kim C."/>
            <person name="Ma K."/>
            <person name="Pan G."/>
            <person name="Roy R."/>
            <person name="Sapra R."/>
            <person name="Story S.V."/>
            <person name="Verhagen M.F."/>
        </authorList>
    </citation>
    <scope>FUNCTION</scope>
    <source>
        <strain evidence="4">ATCC 43587 / DSM 3638 / JCM 8422 / Vc1</strain>
    </source>
</reference>
<reference evidence="7" key="4">
    <citation type="journal article" date="2001" name="Methods Enzymol.">
        <title>Hydrogenases I and II from Pyrococcus furiosus.</title>
        <authorList>
            <person name="Ma K."/>
            <person name="Adams M.W."/>
        </authorList>
    </citation>
    <scope>FUNCTION</scope>
    <scope>CATALYTIC ACTIVITY</scope>
    <scope>SUBUNIT</scope>
    <source>
        <strain evidence="5">ATCC 43587 / DSM 3638 / JCM 8422 / Vc1</strain>
    </source>
</reference>
<organism>
    <name type="scientific">Pyrococcus furiosus (strain ATCC 43587 / DSM 3638 / JCM 8422 / Vc1)</name>
    <dbReference type="NCBI Taxonomy" id="186497"/>
    <lineage>
        <taxon>Archaea</taxon>
        <taxon>Methanobacteriati</taxon>
        <taxon>Methanobacteriota</taxon>
        <taxon>Thermococci</taxon>
        <taxon>Thermococcales</taxon>
        <taxon>Thermococcaceae</taxon>
        <taxon>Pyrococcus</taxon>
    </lineage>
</organism>
<comment type="function">
    <text evidence="3 4 5">Part of a bifunctional enzyme complex that functions as a hydrogen-evolving hydrogenase with sulfur-reducing activity. May play a role in hydrogen cycling during fermentative growth. Activity exhibited with NAD in addition to NADPH. The beta and gamma subunits form the sulfur-reducing component that catalyzes the cytoplasmic production of hydrogen sulfide in the presence of elemental sulfur.</text>
</comment>
<comment type="catalytic activity">
    <reaction evidence="3 5">
        <text>n sulfur + H2 = (n-1) sulfur + hydrogen sulfide + H(+)</text>
        <dbReference type="Rhea" id="RHEA:35591"/>
        <dbReference type="ChEBI" id="CHEBI:15378"/>
        <dbReference type="ChEBI" id="CHEBI:18276"/>
        <dbReference type="ChEBI" id="CHEBI:26833"/>
        <dbReference type="ChEBI" id="CHEBI:29919"/>
        <dbReference type="EC" id="1.12.98.4"/>
    </reaction>
</comment>
<comment type="cofactor">
    <cofactor evidence="3">
        <name>[4Fe-4S] cluster</name>
        <dbReference type="ChEBI" id="CHEBI:49883"/>
    </cofactor>
    <text evidence="3">Binds 2 [4Fe-4S] clusters.</text>
</comment>
<comment type="biophysicochemical properties">
    <kinetics>
        <KM evidence="3">0.2 mM for sulfur (H(2) as cosubstrate)</KM>
        <KM evidence="3">0.67 mM for polysulfide (NADPH as cosubstrate)</KM>
        <text evidence="3">Measured for the whole complex.</text>
    </kinetics>
    <temperatureDependence>
        <text evidence="3">Optimum temperature is greater than 90 degrees Celsius. Activity increases with increasing temperature from 30 degrees Celsius to 90 degrees Celsius. Has a half-life of 6 hours at 95 degrees Celsius.</text>
    </temperatureDependence>
</comment>
<comment type="subunit">
    <text evidence="3 5">Dimer of heterotetramer of alpha, beta, gamma and delta subunits. The nickel-containing alpha and delta subunits constitute the hydrogenase activity. The beta and gamma subunits (flavin-containing dimer) constitute the sulfur reductase activity.</text>
</comment>
<comment type="subcellular location">
    <subcellularLocation>
        <location evidence="3">Cytoplasm</location>
    </subcellularLocation>
</comment>